<protein>
    <recommendedName>
        <fullName>Nucleoprotein</fullName>
        <shortName>NP</shortName>
    </recommendedName>
    <alternativeName>
        <fullName>Nucleocapsid protein</fullName>
        <shortName>Protein N</shortName>
    </alternativeName>
</protein>
<organismHost>
    <name type="scientific">Canis lupus familiaris</name>
    <name type="common">Dog</name>
    <name type="synonym">Canis familiaris</name>
    <dbReference type="NCBI Taxonomy" id="9615"/>
</organismHost>
<organismHost>
    <name type="scientific">Chodsigoa caovansunga</name>
    <name type="common">Van Sung's shrew</name>
    <dbReference type="NCBI Taxonomy" id="269271"/>
</organismHost>
<organismHost>
    <name type="scientific">Felis catus</name>
    <name type="common">Cat</name>
    <name type="synonym">Felis silvestris catus</name>
    <dbReference type="NCBI Taxonomy" id="9685"/>
</organismHost>
<organismHost>
    <name type="scientific">Rodentia</name>
    <dbReference type="NCBI Taxonomy" id="9989"/>
</organismHost>
<accession>P0C570</accession>
<name>NCAP_MOKV</name>
<organism>
    <name type="scientific">Mokola virus</name>
    <name type="common">MOKV</name>
    <dbReference type="NCBI Taxonomy" id="12538"/>
    <lineage>
        <taxon>Viruses</taxon>
        <taxon>Riboviria</taxon>
        <taxon>Orthornavirae</taxon>
        <taxon>Negarnaviricota</taxon>
        <taxon>Haploviricotina</taxon>
        <taxon>Monjiviricetes</taxon>
        <taxon>Mononegavirales</taxon>
        <taxon>Rhabdoviridae</taxon>
        <taxon>Alpharhabdovirinae</taxon>
        <taxon>Lyssavirus</taxon>
    </lineage>
</organism>
<evidence type="ECO:0000250" key="1"/>
<evidence type="ECO:0000305" key="2"/>
<dbReference type="EMBL" id="Y09762">
    <property type="status" value="NOT_ANNOTATED_CDS"/>
    <property type="molecule type" value="Genomic_RNA"/>
</dbReference>
<dbReference type="RefSeq" id="YP_142350.1">
    <property type="nucleotide sequence ID" value="NC_006429.1"/>
</dbReference>
<dbReference type="SMR" id="P0C570"/>
<dbReference type="GeneID" id="3159476"/>
<dbReference type="KEGG" id="vg:3159476"/>
<dbReference type="OrthoDB" id="22890at10239"/>
<dbReference type="Proteomes" id="UP000006826">
    <property type="component" value="Segment"/>
</dbReference>
<dbReference type="GO" id="GO:0019029">
    <property type="term" value="C:helical viral capsid"/>
    <property type="evidence" value="ECO:0007669"/>
    <property type="project" value="UniProtKB-KW"/>
</dbReference>
<dbReference type="GO" id="GO:0030430">
    <property type="term" value="C:host cell cytoplasm"/>
    <property type="evidence" value="ECO:0007669"/>
    <property type="project" value="UniProtKB-SubCell"/>
</dbReference>
<dbReference type="GO" id="GO:1990904">
    <property type="term" value="C:ribonucleoprotein complex"/>
    <property type="evidence" value="ECO:0007669"/>
    <property type="project" value="UniProtKB-KW"/>
</dbReference>
<dbReference type="GO" id="GO:0019013">
    <property type="term" value="C:viral nucleocapsid"/>
    <property type="evidence" value="ECO:0007669"/>
    <property type="project" value="UniProtKB-KW"/>
</dbReference>
<dbReference type="GO" id="GO:0003723">
    <property type="term" value="F:RNA binding"/>
    <property type="evidence" value="ECO:0007669"/>
    <property type="project" value="UniProtKB-KW"/>
</dbReference>
<dbReference type="Gene3D" id="1.10.3610.10">
    <property type="entry name" value="Nucleoprotein"/>
    <property type="match status" value="1"/>
</dbReference>
<dbReference type="Gene3D" id="1.10.3570.10">
    <property type="entry name" value="Rhabdovirus nucleocapsid protein like domain"/>
    <property type="match status" value="1"/>
</dbReference>
<dbReference type="InterPro" id="IPR000448">
    <property type="entry name" value="Rhabdo_ncapsid"/>
</dbReference>
<dbReference type="InterPro" id="IPR023331">
    <property type="entry name" value="Rhabdovirus_ncapsid_C"/>
</dbReference>
<dbReference type="InterPro" id="IPR023330">
    <property type="entry name" value="Rhabdovirus_ncapsid_N"/>
</dbReference>
<dbReference type="InterPro" id="IPR035961">
    <property type="entry name" value="Rhabdovirus_nucleoprotein-like"/>
</dbReference>
<dbReference type="Pfam" id="PF00945">
    <property type="entry name" value="Rhabdo_ncap"/>
    <property type="match status" value="1"/>
</dbReference>
<dbReference type="SUPFAM" id="SSF140809">
    <property type="entry name" value="Rhabdovirus nucleoprotein-like"/>
    <property type="match status" value="1"/>
</dbReference>
<comment type="function">
    <text evidence="1">Encapsidates the genome in a ratio of one protein N per nine ribonucleotides, protecting it from nucleases. If expressed without protein P it binds non-specifically RNA and therefore can bind it's own mRNA. Interaction with protein P abolishes any non-specific RNA binding, and prevents phosphorylation. The soluble N-P complex encapsidates specifically the genomic RNA, with protein N protecting the genome like a pearl necklace. The encapsidated genomic RNA is termed the nucleocapsid (NC) and serves as template for viral transcription and replication. Protein N binds protein P in the NC through a different interaction, and can be phosphorylated. Subsequent viral replication is dependent on intracellular concentration of newly synthesized protein N. During replication, encapsidation by protein N is coupled to RNA synthesis and all replicative products are resistant to nucleases (By similarity).</text>
</comment>
<comment type="subunit">
    <text evidence="1">Homomultimerizes to form the nucleocapsid. Binds to viral genomic RNA. In nucleocapsid, binds protein P and thereby positions the polymerase on the template. Protein P acts as a chaperone on free protein N to prevent it from aggregation before encapsidating genomic RNA (By similarity).</text>
</comment>
<comment type="subcellular location">
    <subcellularLocation>
        <location>Virion</location>
    </subcellularLocation>
    <subcellularLocation>
        <location evidence="1">Host cytoplasm</location>
    </subcellularLocation>
</comment>
<comment type="PTM">
    <text evidence="1">Phosphorylated by host CK2. Unphosphorylated protein N seems to have a better affinity for leader viral promoter encapsidation. Phosphorylation of protein N in ribonucleocapsid may stabilize the interaction with protein P, thereby playing an important role in viral transcription/replication (By similarity).</text>
</comment>
<comment type="miscellaneous">
    <text evidence="1">Displays a superantigen activity in human and mouse, activating mostly V-beta-8 subtypes of T-cell receptor.</text>
</comment>
<comment type="similarity">
    <text evidence="2">Belongs to the lyssavirus nucleocapsid protein family.</text>
</comment>
<gene>
    <name type="primary">N</name>
</gene>
<keyword id="KW-0167">Capsid protein</keyword>
<keyword id="KW-1139">Helical capsid protein</keyword>
<keyword id="KW-1035">Host cytoplasm</keyword>
<keyword id="KW-0597">Phosphoprotein</keyword>
<keyword id="KW-1185">Reference proteome</keyword>
<keyword id="KW-0687">Ribonucleoprotein</keyword>
<keyword id="KW-0694">RNA-binding</keyword>
<keyword id="KW-0766">Superantigen</keyword>
<keyword id="KW-0543">Viral nucleoprotein</keyword>
<keyword id="KW-0946">Virion</keyword>
<feature type="chain" id="PRO_0000295205" description="Nucleoprotein">
    <location>
        <begin position="1"/>
        <end position="450"/>
    </location>
</feature>
<feature type="modified residue" description="Phosphoserine; by host CK2" evidence="1">
    <location>
        <position position="389"/>
    </location>
</feature>
<sequence>MESDKIVFKVNNQVVSLKPEVISDQYEYKYPAILDGKKPGITLGKAPDLNTAYKSILSGMKAAKLDPDDVCSYLAAAMHLFEGVCPEDWVSYGIVIAKKGEKINPSVIVDIVRTNVEGNWAQAGGTDVIRDPTMAEHASLVGLLLCLYRLSKIVGQNTANYKTNVADRMEQIFETAPFAKVVEHHTLMTTHKMCANWSTIPNFRFLVGTYDMFFARVEHIYSALRVGTVVTAYEDCSGLVSFTGFIKQINLSPRDALLYFFHKNFEGEIKRMFEPGQETAVPHSYFIHFRALGLSGKSPYSSNAVGHTFNLIHFVGCYMGQIRSLNATVIQTCAPHEMSVLGGYLGEEFFGKGTFERRFFRDEKEMQDYTELEEARVEASLADDGTVDSDEEDFFSGETRSPEAVYSRIMMNNGKLKKVHIRRYIAVSSNHQARPNSFAEFLNKVYADGS</sequence>
<proteinExistence type="inferred from homology"/>
<reference key="1">
    <citation type="journal article" date="1997" name="J. Gen. Virol.">
        <title>The complete Mokola virus genome sequence: structure of the RNA-dependent RNA polymerase.</title>
        <authorList>
            <person name="Le Mercier P."/>
            <person name="Jacob Y."/>
            <person name="Tordo N."/>
        </authorList>
    </citation>
    <scope>NUCLEOTIDE SEQUENCE [GENOMIC RNA]</scope>
</reference>